<accession>A1V2L8</accession>
<protein>
    <recommendedName>
        <fullName evidence="1">NADH-quinone oxidoreductase subunit C</fullName>
        <ecNumber evidence="1">7.1.1.-</ecNumber>
    </recommendedName>
    <alternativeName>
        <fullName evidence="1">NADH dehydrogenase I subunit C</fullName>
    </alternativeName>
    <alternativeName>
        <fullName evidence="1">NDH-1 subunit C</fullName>
    </alternativeName>
</protein>
<feature type="chain" id="PRO_0000358067" description="NADH-quinone oxidoreductase subunit C">
    <location>
        <begin position="1"/>
        <end position="200"/>
    </location>
</feature>
<sequence length="200" mass="22765">MASKIETLKANLEAALGARAVSLVEAVGELTLVVKASDYLEVAKQLRDDRSLGFEQLIDLCGVDYQTYGDGAYDGPRFAAVLHLLSVANNWRLRVRVFASDDDLPIVPSVVDIWNSANWYEREAFDLYGIVFEGHPDLRRILTDYGFIGHPFRKDFPVSGYVEMRYDPQEKRVVYQPVTIEPREITPRVIREDRYGGLKH</sequence>
<organism>
    <name type="scientific">Burkholderia mallei (strain SAVP1)</name>
    <dbReference type="NCBI Taxonomy" id="320388"/>
    <lineage>
        <taxon>Bacteria</taxon>
        <taxon>Pseudomonadati</taxon>
        <taxon>Pseudomonadota</taxon>
        <taxon>Betaproteobacteria</taxon>
        <taxon>Burkholderiales</taxon>
        <taxon>Burkholderiaceae</taxon>
        <taxon>Burkholderia</taxon>
        <taxon>pseudomallei group</taxon>
    </lineage>
</organism>
<reference key="1">
    <citation type="journal article" date="2010" name="Genome Biol. Evol.">
        <title>Continuing evolution of Burkholderia mallei through genome reduction and large-scale rearrangements.</title>
        <authorList>
            <person name="Losada L."/>
            <person name="Ronning C.M."/>
            <person name="DeShazer D."/>
            <person name="Woods D."/>
            <person name="Fedorova N."/>
            <person name="Kim H.S."/>
            <person name="Shabalina S.A."/>
            <person name="Pearson T.R."/>
            <person name="Brinkac L."/>
            <person name="Tan P."/>
            <person name="Nandi T."/>
            <person name="Crabtree J."/>
            <person name="Badger J."/>
            <person name="Beckstrom-Sternberg S."/>
            <person name="Saqib M."/>
            <person name="Schutzer S.E."/>
            <person name="Keim P."/>
            <person name="Nierman W.C."/>
        </authorList>
    </citation>
    <scope>NUCLEOTIDE SEQUENCE [LARGE SCALE GENOMIC DNA]</scope>
    <source>
        <strain>SAVP1</strain>
    </source>
</reference>
<name>NUOC_BURMS</name>
<comment type="function">
    <text evidence="1">NDH-1 shuttles electrons from NADH, via FMN and iron-sulfur (Fe-S) centers, to quinones in the respiratory chain. The immediate electron acceptor for the enzyme in this species is believed to be ubiquinone. Couples the redox reaction to proton translocation (for every two electrons transferred, four hydrogen ions are translocated across the cytoplasmic membrane), and thus conserves the redox energy in a proton gradient.</text>
</comment>
<comment type="catalytic activity">
    <reaction evidence="1">
        <text>a quinone + NADH + 5 H(+)(in) = a quinol + NAD(+) + 4 H(+)(out)</text>
        <dbReference type="Rhea" id="RHEA:57888"/>
        <dbReference type="ChEBI" id="CHEBI:15378"/>
        <dbReference type="ChEBI" id="CHEBI:24646"/>
        <dbReference type="ChEBI" id="CHEBI:57540"/>
        <dbReference type="ChEBI" id="CHEBI:57945"/>
        <dbReference type="ChEBI" id="CHEBI:132124"/>
    </reaction>
</comment>
<comment type="subunit">
    <text evidence="1">NDH-1 is composed of 14 different subunits. Subunits NuoB, C, D, E, F, and G constitute the peripheral sector of the complex.</text>
</comment>
<comment type="subcellular location">
    <subcellularLocation>
        <location evidence="1">Cell inner membrane</location>
        <topology evidence="1">Peripheral membrane protein</topology>
        <orientation evidence="1">Cytoplasmic side</orientation>
    </subcellularLocation>
</comment>
<comment type="similarity">
    <text evidence="1">Belongs to the complex I 30 kDa subunit family.</text>
</comment>
<gene>
    <name evidence="1" type="primary">nuoC</name>
    <name type="ordered locus">BMASAVP1_A1132</name>
</gene>
<dbReference type="EC" id="7.1.1.-" evidence="1"/>
<dbReference type="EMBL" id="CP000526">
    <property type="protein sequence ID" value="ABM52295.1"/>
    <property type="molecule type" value="Genomic_DNA"/>
</dbReference>
<dbReference type="RefSeq" id="WP_004186121.1">
    <property type="nucleotide sequence ID" value="NC_008785.1"/>
</dbReference>
<dbReference type="SMR" id="A1V2L8"/>
<dbReference type="KEGG" id="bmv:BMASAVP1_A1132"/>
<dbReference type="HOGENOM" id="CLU_042628_2_1_4"/>
<dbReference type="GO" id="GO:0005886">
    <property type="term" value="C:plasma membrane"/>
    <property type="evidence" value="ECO:0007669"/>
    <property type="project" value="UniProtKB-SubCell"/>
</dbReference>
<dbReference type="GO" id="GO:0008137">
    <property type="term" value="F:NADH dehydrogenase (ubiquinone) activity"/>
    <property type="evidence" value="ECO:0007669"/>
    <property type="project" value="InterPro"/>
</dbReference>
<dbReference type="GO" id="GO:0050136">
    <property type="term" value="F:NADH:ubiquinone reductase (non-electrogenic) activity"/>
    <property type="evidence" value="ECO:0007669"/>
    <property type="project" value="UniProtKB-UniRule"/>
</dbReference>
<dbReference type="GO" id="GO:0048038">
    <property type="term" value="F:quinone binding"/>
    <property type="evidence" value="ECO:0007669"/>
    <property type="project" value="UniProtKB-KW"/>
</dbReference>
<dbReference type="Gene3D" id="3.30.460.80">
    <property type="entry name" value="NADH:ubiquinone oxidoreductase, 30kDa subunit"/>
    <property type="match status" value="1"/>
</dbReference>
<dbReference type="HAMAP" id="MF_01357">
    <property type="entry name" value="NDH1_NuoC"/>
    <property type="match status" value="1"/>
</dbReference>
<dbReference type="InterPro" id="IPR010218">
    <property type="entry name" value="NADH_DH_suC"/>
</dbReference>
<dbReference type="InterPro" id="IPR037232">
    <property type="entry name" value="NADH_quin_OxRdtase_su_C/D-like"/>
</dbReference>
<dbReference type="InterPro" id="IPR001268">
    <property type="entry name" value="NADH_UbQ_OxRdtase_30kDa_su"/>
</dbReference>
<dbReference type="InterPro" id="IPR020396">
    <property type="entry name" value="NADH_UbQ_OxRdtase_CS"/>
</dbReference>
<dbReference type="NCBIfam" id="TIGR01961">
    <property type="entry name" value="NuoC_fam"/>
    <property type="match status" value="1"/>
</dbReference>
<dbReference type="NCBIfam" id="NF004730">
    <property type="entry name" value="PRK06074.1-1"/>
    <property type="match status" value="1"/>
</dbReference>
<dbReference type="PANTHER" id="PTHR10884:SF14">
    <property type="entry name" value="NADH DEHYDROGENASE [UBIQUINONE] IRON-SULFUR PROTEIN 3, MITOCHONDRIAL"/>
    <property type="match status" value="1"/>
</dbReference>
<dbReference type="PANTHER" id="PTHR10884">
    <property type="entry name" value="NADH DEHYDROGENASE UBIQUINONE IRON-SULFUR PROTEIN 3"/>
    <property type="match status" value="1"/>
</dbReference>
<dbReference type="Pfam" id="PF00329">
    <property type="entry name" value="Complex1_30kDa"/>
    <property type="match status" value="1"/>
</dbReference>
<dbReference type="SUPFAM" id="SSF143243">
    <property type="entry name" value="Nqo5-like"/>
    <property type="match status" value="1"/>
</dbReference>
<dbReference type="PROSITE" id="PS00542">
    <property type="entry name" value="COMPLEX1_30K"/>
    <property type="match status" value="1"/>
</dbReference>
<proteinExistence type="inferred from homology"/>
<evidence type="ECO:0000255" key="1">
    <source>
        <dbReference type="HAMAP-Rule" id="MF_01357"/>
    </source>
</evidence>
<keyword id="KW-0997">Cell inner membrane</keyword>
<keyword id="KW-1003">Cell membrane</keyword>
<keyword id="KW-0472">Membrane</keyword>
<keyword id="KW-0520">NAD</keyword>
<keyword id="KW-0874">Quinone</keyword>
<keyword id="KW-1278">Translocase</keyword>
<keyword id="KW-0813">Transport</keyword>
<keyword id="KW-0830">Ubiquinone</keyword>